<protein>
    <recommendedName>
        <fullName>Nitrate reductase [NAD(P)H]</fullName>
        <shortName>NR</shortName>
        <ecNumber>1.7.1.2</ecNumber>
    </recommendedName>
</protein>
<sequence>MAASVENRRFTHHEPAVNGLVRTFKPVPNSHRSDSPDLGRQIPSSPKKQVATGEDSSSEDENENDYKELIQKGNGELEPSILDPRDEATADNWVERNATMVRLTGKHPFNSEAPLTRLMHHGFITPAPLHYVRNHGPVPKARWEDWSVEVCGLVKRPARFTMDRLVTEFRSREFPVTLVCAGNRRKEQNMVKKTIGFNWGAAGVSTSVWRGVPLRDVLKRCGIFSRGRGAFNVCFEGAEDLPGGGGSKYGTSVKYEMAMDPARDIILGYMQNGERLSPDHGFPVRMIIPGFIGGRMVKWLKRIIVTTKESDNYYHYNDNRVLPSHVDADVAKAEAWWYKPEHIINELNINSVITTPCHEEILPINSWTTQRPYTLRGYAYSGGGRKVTRVEITMNGGEKWRVCALDHPEKPNKYGKYWCWCFWSLEVEVLDLLGAKEIAVRAWDEAHNTQPEKLIWNVMGMMNNCWFRVKTNVCKAHMGEIGIAFEHPTVPGNESGGWMAREKNLETSSDANQSLKKSVSSPFMNTSSKMFSMSEVKKHNSAESAWIIVHGHIYDCTHFLKDHPGGADSILINAGTDCTEEFDAIHSDKAKKMLEDYRIGELITTGYVSDSPNSTVHGASNTSHLAPIKEIAPLRNVALIPGAKIPTKLVYKKSLSHDVRLFRLALPSDDQVLGLPVGKHVFLCATIDDKLCMRAYTPTSTIDEVGYLDLVVKIYFKNSNPRFPNGGLMSQHLDSLPIGSVLHVKGPLGHVEYTGRGNFLVHGEPKFAKRLAMVAGGTGITPIYQVIQAILKDPEDETEMFVVYANRTEDDILLREELDDWAKKHEKLKVWYVVKESKREGWEYSVGYIRESILREHIPEGSDDVLALACGAPSMIEEAVRLNLEKMNYDTKNSLIIF</sequence>
<feature type="chain" id="PRO_0000166075" description="Nitrate reductase [NAD(P)H]">
    <location>
        <begin position="1"/>
        <end position="898"/>
    </location>
</feature>
<feature type="domain" description="Cytochrome b5 heme-binding" evidence="6">
    <location>
        <begin position="528"/>
        <end position="603"/>
    </location>
</feature>
<feature type="domain" description="FAD-binding FR-type" evidence="7">
    <location>
        <begin position="642"/>
        <end position="754"/>
    </location>
</feature>
<feature type="region of interest" description="Disordered" evidence="8">
    <location>
        <begin position="1"/>
        <end position="65"/>
    </location>
</feature>
<feature type="compositionally biased region" description="Basic and acidic residues" evidence="8">
    <location>
        <begin position="1"/>
        <end position="15"/>
    </location>
</feature>
<feature type="binding site" evidence="4">
    <location>
        <position position="180"/>
    </location>
    <ligand>
        <name>Mo-molybdopterin</name>
        <dbReference type="ChEBI" id="CHEBI:71302"/>
    </ligand>
    <ligandPart>
        <name>Mo</name>
        <dbReference type="ChEBI" id="CHEBI:28685"/>
    </ligandPart>
</feature>
<feature type="binding site" description="axial binding residue" evidence="6">
    <location>
        <position position="563"/>
    </location>
    <ligand>
        <name>heme</name>
        <dbReference type="ChEBI" id="CHEBI:30413"/>
    </ligand>
    <ligandPart>
        <name>Fe</name>
        <dbReference type="ChEBI" id="CHEBI:18248"/>
    </ligandPart>
</feature>
<feature type="binding site" description="axial binding residue" evidence="6">
    <location>
        <position position="586"/>
    </location>
    <ligand>
        <name>heme</name>
        <dbReference type="ChEBI" id="CHEBI:30413"/>
    </ligand>
    <ligandPart>
        <name>Fe</name>
        <dbReference type="ChEBI" id="CHEBI:18248"/>
    </ligandPart>
</feature>
<feature type="binding site" evidence="2">
    <location>
        <begin position="694"/>
        <end position="697"/>
    </location>
    <ligand>
        <name>FAD</name>
        <dbReference type="ChEBI" id="CHEBI:57692"/>
    </ligand>
</feature>
<feature type="binding site" evidence="2">
    <location>
        <begin position="711"/>
        <end position="715"/>
    </location>
    <ligand>
        <name>FAD</name>
        <dbReference type="ChEBI" id="CHEBI:57692"/>
    </ligand>
</feature>
<feature type="binding site" evidence="3">
    <location>
        <position position="716"/>
    </location>
    <ligand>
        <name>FAD</name>
        <dbReference type="ChEBI" id="CHEBI:57692"/>
    </ligand>
</feature>
<feature type="binding site" evidence="2">
    <location>
        <position position="723"/>
    </location>
    <ligand>
        <name>FAD</name>
        <dbReference type="ChEBI" id="CHEBI:57692"/>
    </ligand>
</feature>
<feature type="binding site" evidence="2">
    <location>
        <begin position="728"/>
        <end position="730"/>
    </location>
    <ligand>
        <name>FAD</name>
        <dbReference type="ChEBI" id="CHEBI:57692"/>
    </ligand>
</feature>
<feature type="binding site" evidence="2">
    <location>
        <position position="781"/>
    </location>
    <ligand>
        <name>FAD</name>
        <dbReference type="ChEBI" id="CHEBI:57692"/>
    </ligand>
</feature>
<feature type="disulfide bond" description="Interchain" evidence="5">
    <location>
        <position position="419"/>
    </location>
</feature>
<evidence type="ECO:0000250" key="1"/>
<evidence type="ECO:0000250" key="2">
    <source>
        <dbReference type="UniProtKB" id="A0A286R227"/>
    </source>
</evidence>
<evidence type="ECO:0000250" key="3">
    <source>
        <dbReference type="UniProtKB" id="P17571"/>
    </source>
</evidence>
<evidence type="ECO:0000250" key="4">
    <source>
        <dbReference type="UniProtKB" id="P49050"/>
    </source>
</evidence>
<evidence type="ECO:0000255" key="5"/>
<evidence type="ECO:0000255" key="6">
    <source>
        <dbReference type="PROSITE-ProRule" id="PRU00279"/>
    </source>
</evidence>
<evidence type="ECO:0000255" key="7">
    <source>
        <dbReference type="PROSITE-ProRule" id="PRU00716"/>
    </source>
</evidence>
<evidence type="ECO:0000256" key="8">
    <source>
        <dbReference type="SAM" id="MobiDB-lite"/>
    </source>
</evidence>
<evidence type="ECO:0000305" key="9"/>
<comment type="function">
    <text>Nitrate reductase is a key enzyme involved in the first step of nitrate assimilation in plants, fungi and bacteria.</text>
</comment>
<comment type="catalytic activity">
    <reaction>
        <text>nitrite + NAD(+) + H2O = nitrate + NADH + H(+)</text>
        <dbReference type="Rhea" id="RHEA:17913"/>
        <dbReference type="ChEBI" id="CHEBI:15377"/>
        <dbReference type="ChEBI" id="CHEBI:15378"/>
        <dbReference type="ChEBI" id="CHEBI:16301"/>
        <dbReference type="ChEBI" id="CHEBI:17632"/>
        <dbReference type="ChEBI" id="CHEBI:57540"/>
        <dbReference type="ChEBI" id="CHEBI:57945"/>
        <dbReference type="EC" id="1.7.1.2"/>
    </reaction>
</comment>
<comment type="catalytic activity">
    <reaction>
        <text>nitrite + NADP(+) + H2O = nitrate + NADPH + H(+)</text>
        <dbReference type="Rhea" id="RHEA:19061"/>
        <dbReference type="ChEBI" id="CHEBI:15377"/>
        <dbReference type="ChEBI" id="CHEBI:15378"/>
        <dbReference type="ChEBI" id="CHEBI:16301"/>
        <dbReference type="ChEBI" id="CHEBI:17632"/>
        <dbReference type="ChEBI" id="CHEBI:57783"/>
        <dbReference type="ChEBI" id="CHEBI:58349"/>
        <dbReference type="EC" id="1.7.1.2"/>
    </reaction>
</comment>
<comment type="cofactor">
    <cofactor evidence="1">
        <name>FAD</name>
        <dbReference type="ChEBI" id="CHEBI:57692"/>
    </cofactor>
    <text evidence="1">Binds 1 FAD per subunit.</text>
</comment>
<comment type="cofactor">
    <cofactor evidence="1">
        <name>heme</name>
        <dbReference type="ChEBI" id="CHEBI:30413"/>
    </cofactor>
    <text evidence="1">Binds 1 heme group per subunit.</text>
</comment>
<comment type="cofactor">
    <cofactor evidence="1">
        <name>Mo-molybdopterin</name>
        <dbReference type="ChEBI" id="CHEBI:71302"/>
    </cofactor>
    <text evidence="1">Binds 1 Mo-molybdopterin (Mo-MPT) cofactor per subunit.</text>
</comment>
<comment type="subunit">
    <text>Homodimer.</text>
</comment>
<comment type="induction">
    <text>By nitrate.</text>
</comment>
<comment type="similarity">
    <text evidence="9">Belongs to the nitrate reductase family.</text>
</comment>
<dbReference type="EC" id="1.7.1.2"/>
<dbReference type="EMBL" id="X54097">
    <property type="protein sequence ID" value="CAA38031.1"/>
    <property type="molecule type" value="mRNA"/>
</dbReference>
<dbReference type="PIR" id="S15959">
    <property type="entry name" value="RDBJNH"/>
</dbReference>
<dbReference type="SMR" id="P27783"/>
<dbReference type="GO" id="GO:0071949">
    <property type="term" value="F:FAD binding"/>
    <property type="evidence" value="ECO:0000250"/>
    <property type="project" value="UniProtKB"/>
</dbReference>
<dbReference type="GO" id="GO:0020037">
    <property type="term" value="F:heme binding"/>
    <property type="evidence" value="ECO:0007669"/>
    <property type="project" value="InterPro"/>
</dbReference>
<dbReference type="GO" id="GO:0030151">
    <property type="term" value="F:molybdenum ion binding"/>
    <property type="evidence" value="ECO:0000250"/>
    <property type="project" value="UniProtKB"/>
</dbReference>
<dbReference type="GO" id="GO:0043546">
    <property type="term" value="F:molybdopterin cofactor binding"/>
    <property type="evidence" value="ECO:0007669"/>
    <property type="project" value="InterPro"/>
</dbReference>
<dbReference type="GO" id="GO:0009703">
    <property type="term" value="F:nitrate reductase (NADH) activity"/>
    <property type="evidence" value="ECO:0007669"/>
    <property type="project" value="RHEA"/>
</dbReference>
<dbReference type="GO" id="GO:0050464">
    <property type="term" value="F:nitrate reductase (NADPH) activity"/>
    <property type="evidence" value="ECO:0007669"/>
    <property type="project" value="InterPro"/>
</dbReference>
<dbReference type="GO" id="GO:0008482">
    <property type="term" value="F:sulfite oxidase activity"/>
    <property type="evidence" value="ECO:0007669"/>
    <property type="project" value="TreeGrafter"/>
</dbReference>
<dbReference type="GO" id="GO:0042128">
    <property type="term" value="P:nitrate assimilation"/>
    <property type="evidence" value="ECO:0007669"/>
    <property type="project" value="UniProtKB-KW"/>
</dbReference>
<dbReference type="GO" id="GO:0006809">
    <property type="term" value="P:nitric oxide biosynthetic process"/>
    <property type="evidence" value="ECO:0007669"/>
    <property type="project" value="InterPro"/>
</dbReference>
<dbReference type="GO" id="GO:0006790">
    <property type="term" value="P:sulfur compound metabolic process"/>
    <property type="evidence" value="ECO:0007669"/>
    <property type="project" value="TreeGrafter"/>
</dbReference>
<dbReference type="CDD" id="cd06183">
    <property type="entry name" value="cyt_b5_reduct_like"/>
    <property type="match status" value="1"/>
</dbReference>
<dbReference type="CDD" id="cd02112">
    <property type="entry name" value="eukary_NR_Moco"/>
    <property type="match status" value="1"/>
</dbReference>
<dbReference type="FunFam" id="2.40.30.10:FF:000021">
    <property type="entry name" value="NADH-cytochrome b5 reductase"/>
    <property type="match status" value="1"/>
</dbReference>
<dbReference type="FunFam" id="2.60.40.650:FF:000001">
    <property type="entry name" value="Nitrate reductase"/>
    <property type="match status" value="1"/>
</dbReference>
<dbReference type="FunFam" id="3.10.120.10:FF:000008">
    <property type="entry name" value="Nitrate reductase"/>
    <property type="match status" value="1"/>
</dbReference>
<dbReference type="FunFam" id="3.90.420.10:FF:000003">
    <property type="entry name" value="Nitrate reductase"/>
    <property type="match status" value="1"/>
</dbReference>
<dbReference type="FunFam" id="3.40.50.80:FF:000025">
    <property type="entry name" value="Nitrate reductase [NADH]"/>
    <property type="match status" value="1"/>
</dbReference>
<dbReference type="Gene3D" id="2.60.40.650">
    <property type="match status" value="1"/>
</dbReference>
<dbReference type="Gene3D" id="3.10.120.10">
    <property type="entry name" value="Cytochrome b5-like heme/steroid binding domain"/>
    <property type="match status" value="1"/>
</dbReference>
<dbReference type="Gene3D" id="3.40.50.80">
    <property type="entry name" value="Nucleotide-binding domain of ferredoxin-NADP reductase (FNR) module"/>
    <property type="match status" value="1"/>
</dbReference>
<dbReference type="Gene3D" id="3.90.420.10">
    <property type="entry name" value="Oxidoreductase, molybdopterin-binding domain"/>
    <property type="match status" value="1"/>
</dbReference>
<dbReference type="Gene3D" id="2.40.30.10">
    <property type="entry name" value="Translation factors"/>
    <property type="match status" value="1"/>
</dbReference>
<dbReference type="InterPro" id="IPR008333">
    <property type="entry name" value="Cbr1-like_FAD-bd_dom"/>
</dbReference>
<dbReference type="InterPro" id="IPR001199">
    <property type="entry name" value="Cyt_B5-like_heme/steroid-bd"/>
</dbReference>
<dbReference type="InterPro" id="IPR036400">
    <property type="entry name" value="Cyt_B5-like_heme/steroid_sf"/>
</dbReference>
<dbReference type="InterPro" id="IPR018506">
    <property type="entry name" value="Cyt_B5_heme-BS"/>
</dbReference>
<dbReference type="InterPro" id="IPR017927">
    <property type="entry name" value="FAD-bd_FR_type"/>
</dbReference>
<dbReference type="InterPro" id="IPR001709">
    <property type="entry name" value="Flavoprot_Pyr_Nucl_cyt_Rdtase"/>
</dbReference>
<dbReference type="InterPro" id="IPR039261">
    <property type="entry name" value="FNR_nucleotide-bd"/>
</dbReference>
<dbReference type="InterPro" id="IPR014756">
    <property type="entry name" value="Ig_E-set"/>
</dbReference>
<dbReference type="InterPro" id="IPR005066">
    <property type="entry name" value="MoCF_OxRdtse_dimer"/>
</dbReference>
<dbReference type="InterPro" id="IPR008335">
    <property type="entry name" value="Mopterin_OxRdtase_euk"/>
</dbReference>
<dbReference type="InterPro" id="IPR012137">
    <property type="entry name" value="Nitr_rd_NADH"/>
</dbReference>
<dbReference type="InterPro" id="IPR001433">
    <property type="entry name" value="OxRdtase_FAD/NAD-bd"/>
</dbReference>
<dbReference type="InterPro" id="IPR000572">
    <property type="entry name" value="OxRdtase_Mopterin-bd_dom"/>
</dbReference>
<dbReference type="InterPro" id="IPR036374">
    <property type="entry name" value="OxRdtase_Mopterin-bd_sf"/>
</dbReference>
<dbReference type="InterPro" id="IPR022407">
    <property type="entry name" value="OxRdtase_Mopterin_BS"/>
</dbReference>
<dbReference type="InterPro" id="IPR017938">
    <property type="entry name" value="Riboflavin_synthase-like_b-brl"/>
</dbReference>
<dbReference type="PANTHER" id="PTHR19372:SF7">
    <property type="entry name" value="SULFITE OXIDASE, MITOCHONDRIAL"/>
    <property type="match status" value="1"/>
</dbReference>
<dbReference type="PANTHER" id="PTHR19372">
    <property type="entry name" value="SULFITE REDUCTASE"/>
    <property type="match status" value="1"/>
</dbReference>
<dbReference type="Pfam" id="PF00173">
    <property type="entry name" value="Cyt-b5"/>
    <property type="match status" value="1"/>
</dbReference>
<dbReference type="Pfam" id="PF00970">
    <property type="entry name" value="FAD_binding_6"/>
    <property type="match status" value="1"/>
</dbReference>
<dbReference type="Pfam" id="PF03404">
    <property type="entry name" value="Mo-co_dimer"/>
    <property type="match status" value="1"/>
</dbReference>
<dbReference type="Pfam" id="PF00175">
    <property type="entry name" value="NAD_binding_1"/>
    <property type="match status" value="1"/>
</dbReference>
<dbReference type="Pfam" id="PF00174">
    <property type="entry name" value="Oxidored_molyb"/>
    <property type="match status" value="1"/>
</dbReference>
<dbReference type="PIRSF" id="PIRSF000233">
    <property type="entry name" value="Nitr_rd_NADH"/>
    <property type="match status" value="1"/>
</dbReference>
<dbReference type="PRINTS" id="PR00406">
    <property type="entry name" value="CYTB5RDTASE"/>
</dbReference>
<dbReference type="PRINTS" id="PR00363">
    <property type="entry name" value="CYTOCHROMEB5"/>
</dbReference>
<dbReference type="PRINTS" id="PR00407">
    <property type="entry name" value="EUMOPTERIN"/>
</dbReference>
<dbReference type="PRINTS" id="PR00371">
    <property type="entry name" value="FPNCR"/>
</dbReference>
<dbReference type="SMART" id="SM01117">
    <property type="entry name" value="Cyt-b5"/>
    <property type="match status" value="1"/>
</dbReference>
<dbReference type="SUPFAM" id="SSF55856">
    <property type="entry name" value="Cytochrome b5-like heme/steroid binding domain"/>
    <property type="match status" value="1"/>
</dbReference>
<dbReference type="SUPFAM" id="SSF81296">
    <property type="entry name" value="E set domains"/>
    <property type="match status" value="1"/>
</dbReference>
<dbReference type="SUPFAM" id="SSF52343">
    <property type="entry name" value="Ferredoxin reductase-like, C-terminal NADP-linked domain"/>
    <property type="match status" value="1"/>
</dbReference>
<dbReference type="SUPFAM" id="SSF56524">
    <property type="entry name" value="Oxidoreductase molybdopterin-binding domain"/>
    <property type="match status" value="1"/>
</dbReference>
<dbReference type="SUPFAM" id="SSF63380">
    <property type="entry name" value="Riboflavin synthase domain-like"/>
    <property type="match status" value="1"/>
</dbReference>
<dbReference type="PROSITE" id="PS00191">
    <property type="entry name" value="CYTOCHROME_B5_1"/>
    <property type="match status" value="1"/>
</dbReference>
<dbReference type="PROSITE" id="PS50255">
    <property type="entry name" value="CYTOCHROME_B5_2"/>
    <property type="match status" value="1"/>
</dbReference>
<dbReference type="PROSITE" id="PS51384">
    <property type="entry name" value="FAD_FR"/>
    <property type="match status" value="1"/>
</dbReference>
<dbReference type="PROSITE" id="PS00559">
    <property type="entry name" value="MOLYBDOPTERIN_EUK"/>
    <property type="match status" value="1"/>
</dbReference>
<name>NIA_BETPN</name>
<keyword id="KW-1015">Disulfide bond</keyword>
<keyword id="KW-0274">FAD</keyword>
<keyword id="KW-0285">Flavoprotein</keyword>
<keyword id="KW-0349">Heme</keyword>
<keyword id="KW-0408">Iron</keyword>
<keyword id="KW-0479">Metal-binding</keyword>
<keyword id="KW-0500">Molybdenum</keyword>
<keyword id="KW-0520">NAD</keyword>
<keyword id="KW-0521">NADP</keyword>
<keyword id="KW-0534">Nitrate assimilation</keyword>
<keyword id="KW-0560">Oxidoreductase</keyword>
<proteinExistence type="evidence at transcript level"/>
<organism>
    <name type="scientific">Betula pendula</name>
    <name type="common">European white birch</name>
    <name type="synonym">Betula verrucosa</name>
    <dbReference type="NCBI Taxonomy" id="3505"/>
    <lineage>
        <taxon>Eukaryota</taxon>
        <taxon>Viridiplantae</taxon>
        <taxon>Streptophyta</taxon>
        <taxon>Embryophyta</taxon>
        <taxon>Tracheophyta</taxon>
        <taxon>Spermatophyta</taxon>
        <taxon>Magnoliopsida</taxon>
        <taxon>eudicotyledons</taxon>
        <taxon>Gunneridae</taxon>
        <taxon>Pentapetalae</taxon>
        <taxon>rosids</taxon>
        <taxon>fabids</taxon>
        <taxon>Fagales</taxon>
        <taxon>Betulaceae</taxon>
        <taxon>Betula</taxon>
    </lineage>
</organism>
<accession>P27783</accession>
<gene>
    <name type="primary">NIA1</name>
</gene>
<reference key="1">
    <citation type="journal article" date="1991" name="Mol. Gen. Genet.">
        <title>Sequence of a cDNA encoding the bi-specific NAD(P)H-nitrate reductase from the tree Betula pendula and identification of conserved protein regions.</title>
        <authorList>
            <person name="Friemann A."/>
            <person name="Brinkmann K."/>
            <person name="Hachtel W."/>
        </authorList>
    </citation>
    <scope>NUCLEOTIDE SEQUENCE [MRNA]</scope>
    <source>
        <tissue>Leaf</tissue>
    </source>
</reference>